<evidence type="ECO:0000255" key="1">
    <source>
        <dbReference type="HAMAP-Rule" id="MF_01719"/>
    </source>
</evidence>
<dbReference type="EC" id="7.4.2.11" evidence="1"/>
<dbReference type="EMBL" id="AM260479">
    <property type="protein sequence ID" value="CAJ91958.1"/>
    <property type="molecule type" value="Genomic_DNA"/>
</dbReference>
<dbReference type="RefSeq" id="WP_011614704.1">
    <property type="nucleotide sequence ID" value="NC_008313.1"/>
</dbReference>
<dbReference type="SMR" id="Q0KDG3"/>
<dbReference type="STRING" id="381666.H16_A0811"/>
<dbReference type="KEGG" id="reh:H16_A0811"/>
<dbReference type="PATRIC" id="fig|381666.6.peg.1183"/>
<dbReference type="eggNOG" id="COG1135">
    <property type="taxonomic scope" value="Bacteria"/>
</dbReference>
<dbReference type="HOGENOM" id="CLU_000604_1_3_4"/>
<dbReference type="OrthoDB" id="9802264at2"/>
<dbReference type="Proteomes" id="UP000008210">
    <property type="component" value="Chromosome 1"/>
</dbReference>
<dbReference type="GO" id="GO:0005886">
    <property type="term" value="C:plasma membrane"/>
    <property type="evidence" value="ECO:0007669"/>
    <property type="project" value="UniProtKB-SubCell"/>
</dbReference>
<dbReference type="GO" id="GO:0033232">
    <property type="term" value="F:ABC-type D-methionine transporter activity"/>
    <property type="evidence" value="ECO:0007669"/>
    <property type="project" value="UniProtKB-EC"/>
</dbReference>
<dbReference type="GO" id="GO:0005524">
    <property type="term" value="F:ATP binding"/>
    <property type="evidence" value="ECO:0007669"/>
    <property type="project" value="UniProtKB-KW"/>
</dbReference>
<dbReference type="GO" id="GO:0016887">
    <property type="term" value="F:ATP hydrolysis activity"/>
    <property type="evidence" value="ECO:0007669"/>
    <property type="project" value="InterPro"/>
</dbReference>
<dbReference type="CDD" id="cd03258">
    <property type="entry name" value="ABC_MetN_methionine_transporter"/>
    <property type="match status" value="1"/>
</dbReference>
<dbReference type="FunFam" id="3.40.50.300:FF:000056">
    <property type="entry name" value="Cell division ATP-binding protein FtsE"/>
    <property type="match status" value="1"/>
</dbReference>
<dbReference type="Gene3D" id="3.30.70.260">
    <property type="match status" value="1"/>
</dbReference>
<dbReference type="Gene3D" id="3.40.50.300">
    <property type="entry name" value="P-loop containing nucleotide triphosphate hydrolases"/>
    <property type="match status" value="1"/>
</dbReference>
<dbReference type="InterPro" id="IPR003593">
    <property type="entry name" value="AAA+_ATPase"/>
</dbReference>
<dbReference type="InterPro" id="IPR003439">
    <property type="entry name" value="ABC_transporter-like_ATP-bd"/>
</dbReference>
<dbReference type="InterPro" id="IPR017871">
    <property type="entry name" value="ABC_transporter-like_CS"/>
</dbReference>
<dbReference type="InterPro" id="IPR045865">
    <property type="entry name" value="ACT-like_dom_sf"/>
</dbReference>
<dbReference type="InterPro" id="IPR041701">
    <property type="entry name" value="MetN_ABC"/>
</dbReference>
<dbReference type="InterPro" id="IPR050086">
    <property type="entry name" value="MetN_ABC_transporter-like"/>
</dbReference>
<dbReference type="InterPro" id="IPR018449">
    <property type="entry name" value="NIL_domain"/>
</dbReference>
<dbReference type="InterPro" id="IPR027417">
    <property type="entry name" value="P-loop_NTPase"/>
</dbReference>
<dbReference type="PANTHER" id="PTHR43166">
    <property type="entry name" value="AMINO ACID IMPORT ATP-BINDING PROTEIN"/>
    <property type="match status" value="1"/>
</dbReference>
<dbReference type="PANTHER" id="PTHR43166:SF30">
    <property type="entry name" value="METHIONINE IMPORT ATP-BINDING PROTEIN METN"/>
    <property type="match status" value="1"/>
</dbReference>
<dbReference type="Pfam" id="PF00005">
    <property type="entry name" value="ABC_tran"/>
    <property type="match status" value="1"/>
</dbReference>
<dbReference type="Pfam" id="PF09383">
    <property type="entry name" value="NIL"/>
    <property type="match status" value="1"/>
</dbReference>
<dbReference type="SMART" id="SM00382">
    <property type="entry name" value="AAA"/>
    <property type="match status" value="1"/>
</dbReference>
<dbReference type="SMART" id="SM00930">
    <property type="entry name" value="NIL"/>
    <property type="match status" value="1"/>
</dbReference>
<dbReference type="SUPFAM" id="SSF55021">
    <property type="entry name" value="ACT-like"/>
    <property type="match status" value="1"/>
</dbReference>
<dbReference type="SUPFAM" id="SSF52540">
    <property type="entry name" value="P-loop containing nucleoside triphosphate hydrolases"/>
    <property type="match status" value="1"/>
</dbReference>
<dbReference type="PROSITE" id="PS00211">
    <property type="entry name" value="ABC_TRANSPORTER_1"/>
    <property type="match status" value="1"/>
</dbReference>
<dbReference type="PROSITE" id="PS50893">
    <property type="entry name" value="ABC_TRANSPORTER_2"/>
    <property type="match status" value="1"/>
</dbReference>
<dbReference type="PROSITE" id="PS51264">
    <property type="entry name" value="METN"/>
    <property type="match status" value="1"/>
</dbReference>
<proteinExistence type="inferred from homology"/>
<feature type="chain" id="PRO_0000277693" description="Methionine import ATP-binding protein MetN">
    <location>
        <begin position="1"/>
        <end position="344"/>
    </location>
</feature>
<feature type="domain" description="ABC transporter" evidence="1">
    <location>
        <begin position="2"/>
        <end position="241"/>
    </location>
</feature>
<feature type="binding site" evidence="1">
    <location>
        <begin position="38"/>
        <end position="45"/>
    </location>
    <ligand>
        <name>ATP</name>
        <dbReference type="ChEBI" id="CHEBI:30616"/>
    </ligand>
</feature>
<reference key="1">
    <citation type="journal article" date="2006" name="Nat. Biotechnol.">
        <title>Genome sequence of the bioplastic-producing 'Knallgas' bacterium Ralstonia eutropha H16.</title>
        <authorList>
            <person name="Pohlmann A."/>
            <person name="Fricke W.F."/>
            <person name="Reinecke F."/>
            <person name="Kusian B."/>
            <person name="Liesegang H."/>
            <person name="Cramm R."/>
            <person name="Eitinger T."/>
            <person name="Ewering C."/>
            <person name="Poetter M."/>
            <person name="Schwartz E."/>
            <person name="Strittmatter A."/>
            <person name="Voss I."/>
            <person name="Gottschalk G."/>
            <person name="Steinbuechel A."/>
            <person name="Friedrich B."/>
            <person name="Bowien B."/>
        </authorList>
    </citation>
    <scope>NUCLEOTIDE SEQUENCE [LARGE SCALE GENOMIC DNA]</scope>
    <source>
        <strain>ATCC 17699 / DSM 428 / KCTC 22496 / NCIMB 10442 / H16 / Stanier 337</strain>
    </source>
</reference>
<keyword id="KW-0029">Amino-acid transport</keyword>
<keyword id="KW-0067">ATP-binding</keyword>
<keyword id="KW-0997">Cell inner membrane</keyword>
<keyword id="KW-1003">Cell membrane</keyword>
<keyword id="KW-0472">Membrane</keyword>
<keyword id="KW-0547">Nucleotide-binding</keyword>
<keyword id="KW-1185">Reference proteome</keyword>
<keyword id="KW-1278">Translocase</keyword>
<keyword id="KW-0813">Transport</keyword>
<accession>Q0KDG3</accession>
<comment type="function">
    <text evidence="1">Part of the ABC transporter complex MetNIQ involved in methionine import. Responsible for energy coupling to the transport system.</text>
</comment>
<comment type="catalytic activity">
    <reaction evidence="1">
        <text>L-methionine(out) + ATP + H2O = L-methionine(in) + ADP + phosphate + H(+)</text>
        <dbReference type="Rhea" id="RHEA:29779"/>
        <dbReference type="ChEBI" id="CHEBI:15377"/>
        <dbReference type="ChEBI" id="CHEBI:15378"/>
        <dbReference type="ChEBI" id="CHEBI:30616"/>
        <dbReference type="ChEBI" id="CHEBI:43474"/>
        <dbReference type="ChEBI" id="CHEBI:57844"/>
        <dbReference type="ChEBI" id="CHEBI:456216"/>
        <dbReference type="EC" id="7.4.2.11"/>
    </reaction>
</comment>
<comment type="catalytic activity">
    <reaction evidence="1">
        <text>D-methionine(out) + ATP + H2O = D-methionine(in) + ADP + phosphate + H(+)</text>
        <dbReference type="Rhea" id="RHEA:29767"/>
        <dbReference type="ChEBI" id="CHEBI:15377"/>
        <dbReference type="ChEBI" id="CHEBI:15378"/>
        <dbReference type="ChEBI" id="CHEBI:30616"/>
        <dbReference type="ChEBI" id="CHEBI:43474"/>
        <dbReference type="ChEBI" id="CHEBI:57932"/>
        <dbReference type="ChEBI" id="CHEBI:456216"/>
        <dbReference type="EC" id="7.4.2.11"/>
    </reaction>
</comment>
<comment type="subunit">
    <text evidence="1">The complex is composed of two ATP-binding proteins (MetN), two transmembrane proteins (MetI) and a solute-binding protein (MetQ).</text>
</comment>
<comment type="subcellular location">
    <subcellularLocation>
        <location evidence="1">Cell inner membrane</location>
        <topology evidence="1">Peripheral membrane protein</topology>
    </subcellularLocation>
</comment>
<comment type="similarity">
    <text evidence="1">Belongs to the ABC transporter superfamily. Methionine importer (TC 3.A.1.24) family.</text>
</comment>
<name>METN_CUPNH</name>
<protein>
    <recommendedName>
        <fullName evidence="1">Methionine import ATP-binding protein MetN</fullName>
        <ecNumber evidence="1">7.4.2.11</ecNumber>
    </recommendedName>
</protein>
<sequence length="344" mass="37097">MIELQGLSQRFPGASGDVHALRDVSLSIAAGEVFGIIGRSGAGKSTLVRAINLLNRPSSGRVIVAGQELTALDTGALRLARREIGMIFQHFNLLSSRTVYENVALPLELAGKPKAEIAATVLPLLDLVGLSALKGRYPAQISGGQKQRVGIARALASKPKVLLSDEATSALDPETTRSILELLKQINRDLGLTIVMITHQMEVIKQVCDRVAVLEAGRVVETGRVIDVFLRPQHDVTRAMIGDVISQELPASVLKRVESRLGNGRDHVYRLAFTGEGVDQPVLAQAIRRYGLDFNILHGHIDEIQGQAFGSLAIMATGELADVKAAMEYLQAQGVVVEEFEHVV</sequence>
<organism>
    <name type="scientific">Cupriavidus necator (strain ATCC 17699 / DSM 428 / KCTC 22496 / NCIMB 10442 / H16 / Stanier 337)</name>
    <name type="common">Ralstonia eutropha</name>
    <dbReference type="NCBI Taxonomy" id="381666"/>
    <lineage>
        <taxon>Bacteria</taxon>
        <taxon>Pseudomonadati</taxon>
        <taxon>Pseudomonadota</taxon>
        <taxon>Betaproteobacteria</taxon>
        <taxon>Burkholderiales</taxon>
        <taxon>Burkholderiaceae</taxon>
        <taxon>Cupriavidus</taxon>
    </lineage>
</organism>
<gene>
    <name evidence="1" type="primary">metN</name>
    <name type="ordered locus">H16_A0811</name>
</gene>